<organismHost>
    <name type="scientific">Aves</name>
    <dbReference type="NCBI Taxonomy" id="8782"/>
</organismHost>
<organismHost>
    <name type="scientific">Felis catus</name>
    <name type="common">Cat</name>
    <name type="synonym">Felis silvestris catus</name>
    <dbReference type="NCBI Taxonomy" id="9685"/>
</organismHost>
<organismHost>
    <name type="scientific">Homo sapiens</name>
    <name type="common">Human</name>
    <dbReference type="NCBI Taxonomy" id="9606"/>
</organismHost>
<organismHost>
    <name type="scientific">Panthera pardus</name>
    <name type="common">Leopard</name>
    <name type="synonym">Felis pardus</name>
    <dbReference type="NCBI Taxonomy" id="9691"/>
</organismHost>
<organismHost>
    <name type="scientific">Panthera tigris</name>
    <name type="common">Tiger</name>
    <dbReference type="NCBI Taxonomy" id="9694"/>
</organismHost>
<organismHost>
    <name type="scientific">Sus scrofa</name>
    <name type="common">Pig</name>
    <dbReference type="NCBI Taxonomy" id="9823"/>
</organismHost>
<gene>
    <name type="primary">PA</name>
</gene>
<protein>
    <recommendedName>
        <fullName>Protein PA-X</fullName>
    </recommendedName>
</protein>
<name>PAX_I02A6</name>
<feature type="chain" id="PRO_0000419357" description="Protein PA-X">
    <location>
        <begin position="1"/>
        <end position="252"/>
    </location>
</feature>
<feature type="active site" evidence="2">
    <location>
        <position position="80"/>
    </location>
</feature>
<feature type="active site" evidence="2">
    <location>
        <position position="108"/>
    </location>
</feature>
<feature type="site" description="Important for efficient shutoff activity and nuclear localization" evidence="4">
    <location>
        <position position="195"/>
    </location>
</feature>
<feature type="site" description="Important for efficient shutoff activity and nuclear localization" evidence="4">
    <location>
        <position position="198"/>
    </location>
</feature>
<feature type="site" description="Important for efficient shutoff activity and nuclear localization" evidence="4">
    <location>
        <position position="199"/>
    </location>
</feature>
<feature type="site" description="Important for efficient shutoff activity" evidence="3">
    <location>
        <position position="202"/>
    </location>
</feature>
<feature type="site" description="Important for efficient shutoff activity" evidence="3">
    <location>
        <position position="203"/>
    </location>
</feature>
<feature type="site" description="Important for efficient shutoff activity" evidence="3">
    <location>
        <position position="206"/>
    </location>
</feature>
<keyword id="KW-1132">Decay of host mRNAs by virus</keyword>
<keyword id="KW-1262">Eukaryotic host gene expression shutoff by virus</keyword>
<keyword id="KW-1035">Host cytoplasm</keyword>
<keyword id="KW-1190">Host gene expression shutoff by virus</keyword>
<keyword id="KW-1192">Host mRNA suppression by virus</keyword>
<keyword id="KW-1048">Host nucleus</keyword>
<keyword id="KW-0945">Host-virus interaction</keyword>
<keyword id="KW-0688">Ribosomal frameshifting</keyword>
<comment type="function">
    <text evidence="1 4">Plays a major role in the shutoff of the host protein expression by cleaving mRNAs probably via an endonuclease activity. This host shutoff allows the virus to escape from the host antiviral response (By similarity). Hijacks host RNA splicing machinery to selectively target host RNAs containing introns for destruction. This may explain the preferential degradation of RNAs that have undergone co- or post-transcriptional processing (By similarity).</text>
</comment>
<comment type="subcellular location">
    <subcellularLocation>
        <location evidence="4">Host cytoplasm</location>
    </subcellularLocation>
    <subcellularLocation>
        <location evidence="4">Host nucleus</location>
    </subcellularLocation>
</comment>
<comment type="alternative products">
    <event type="ribosomal frameshifting"/>
    <isoform>
        <id>P0CK74-1</id>
        <name>PA-X</name>
        <sequence type="displayed"/>
    </isoform>
    <isoform>
        <id>Q6DNX6-1</id>
        <name>PA</name>
        <sequence type="external"/>
    </isoform>
</comment>
<comment type="domain">
    <text evidence="1 4">The probable endonuclease active site in the N-terminus and the basic amino acid cluster in the C-terminus are important for the shutoff activity. The C-terminus acts as a nuclear localization signal (By similarity). The C-terminus is recruited to host protein complexes involved in nuclear Pol II RNA processing (By similarity).</text>
</comment>
<comment type="similarity">
    <text evidence="5">Belongs to the influenza viruses PA-X family.</text>
</comment>
<sequence>MEDFVRQCFNPMIVELAEKAMKEYGEDPKIETNKFAAICTHLEVCFMYSDFHFIDERSESIIVESGDPNALLKHRFEIIEGRDRTMAWTVVNSICNTTGVEKPKFIPDLYDYKENRFIEIGVTRREVHTYYLEKANKIKSEKTHIHIFSFTGEEMATKADYTLDEESRARIKTRLFTIRQEMASRGLWDSFVNPREAKRQLKKNLKSLEPCADLPTKVSHRTSPALKTLEPMWMDSNRTAALRASFLKCQKK</sequence>
<accession>P0CK74</accession>
<organism>
    <name type="scientific">Influenza A virus (strain A/Chicken/Hong Kong/YU22/2002 H5N1 genotype Z)</name>
    <dbReference type="NCBI Taxonomy" id="284177"/>
    <lineage>
        <taxon>Viruses</taxon>
        <taxon>Riboviria</taxon>
        <taxon>Orthornavirae</taxon>
        <taxon>Negarnaviricota</taxon>
        <taxon>Polyploviricotina</taxon>
        <taxon>Insthoviricetes</taxon>
        <taxon>Articulavirales</taxon>
        <taxon>Orthomyxoviridae</taxon>
        <taxon>Alphainfluenzavirus</taxon>
        <taxon>Alphainfluenzavirus influenzae</taxon>
        <taxon>Influenza A virus</taxon>
    </lineage>
</organism>
<evidence type="ECO:0000250" key="1">
    <source>
        <dbReference type="UniProtKB" id="P0CK64"/>
    </source>
</evidence>
<evidence type="ECO:0000250" key="2">
    <source>
        <dbReference type="UniProtKB" id="P0CK68"/>
    </source>
</evidence>
<evidence type="ECO:0000250" key="3">
    <source>
        <dbReference type="UniProtKB" id="P0DJW8"/>
    </source>
</evidence>
<evidence type="ECO:0000250" key="4">
    <source>
        <dbReference type="UniProtKB" id="P0DXO5"/>
    </source>
</evidence>
<evidence type="ECO:0000305" key="5"/>
<reference key="1">
    <citation type="journal article" date="2004" name="Nature">
        <title>Genesis of a highly pathogenic and potentially pandemic H5N1 influenza virus in eastern Asia.</title>
        <authorList>
            <person name="Li K.S."/>
            <person name="Guan Y."/>
            <person name="Wang J."/>
            <person name="Smith G.J.D."/>
            <person name="Xu K.M."/>
            <person name="Duan L."/>
            <person name="Rahardjo A.P."/>
            <person name="Puthavathana P."/>
            <person name="Buranathai C."/>
            <person name="Nguyen T.D."/>
            <person name="Estoepangestie A.T.S."/>
            <person name="Chaisingh A."/>
            <person name="Auewarakul P."/>
            <person name="Long H.T."/>
            <person name="Hanh N.T.H."/>
            <person name="Webby R.J."/>
            <person name="Poon L.L.M."/>
            <person name="Chen H."/>
            <person name="Shortridge K.F."/>
            <person name="Yuen K.Y."/>
            <person name="Webster R.G."/>
            <person name="Peiris J.S.M."/>
        </authorList>
    </citation>
    <scope>NUCLEOTIDE SEQUENCE [GENOMIC RNA]</scope>
</reference>
<reference key="2">
    <citation type="submission" date="2008-03" db="EMBL/GenBank/DDBJ databases">
        <authorList>
            <person name="Li K.S."/>
            <person name="Guan Y."/>
            <person name="Wang J."/>
            <person name="Smith G.J.D."/>
            <person name="Xu K.M."/>
            <person name="Duan L."/>
            <person name="Rahardjo A.P."/>
            <person name="Puthavathana P."/>
            <person name="Buranathai C."/>
            <person name="Nguyen T.D."/>
            <person name="Estoepangestie A.T.S."/>
            <person name="Chaisingh A."/>
            <person name="Auewarakul P."/>
            <person name="Long H.T."/>
            <person name="Hanh N.T.H."/>
            <person name="Lim W."/>
            <person name="Webby R.J."/>
            <person name="Poon L.L.M."/>
            <person name="Chen H."/>
            <person name="Shortridge K.F."/>
            <person name="Yuen K.Y."/>
            <person name="Webster R.G."/>
            <person name="Peiris J.S.M."/>
        </authorList>
    </citation>
    <scope>SEQUENCE REVISION</scope>
</reference>
<proteinExistence type="inferred from homology"/>
<dbReference type="EMBL" id="AY651626">
    <property type="status" value="NOT_ANNOTATED_CDS"/>
    <property type="molecule type" value="Genomic_RNA"/>
</dbReference>
<dbReference type="SMR" id="P0CK74"/>
<dbReference type="GO" id="GO:0003723">
    <property type="term" value="F:RNA binding"/>
    <property type="evidence" value="ECO:0007669"/>
    <property type="project" value="InterPro"/>
</dbReference>
<dbReference type="GO" id="GO:0039694">
    <property type="term" value="P:viral RNA genome replication"/>
    <property type="evidence" value="ECO:0007669"/>
    <property type="project" value="InterPro"/>
</dbReference>
<dbReference type="GO" id="GO:0075523">
    <property type="term" value="P:viral translational frameshifting"/>
    <property type="evidence" value="ECO:0007669"/>
    <property type="project" value="UniProtKB-KW"/>
</dbReference>
<dbReference type="FunFam" id="3.40.91.90:FF:000001">
    <property type="entry name" value="Polymerase acidic protein"/>
    <property type="match status" value="1"/>
</dbReference>
<dbReference type="Gene3D" id="3.40.91.90">
    <property type="entry name" value="Influenza RNA-dependent RNA polymerase subunit PA, endonuclease domain"/>
    <property type="match status" value="1"/>
</dbReference>
<dbReference type="InterPro" id="IPR001009">
    <property type="entry name" value="PA/PA-X"/>
</dbReference>
<dbReference type="InterPro" id="IPR038372">
    <property type="entry name" value="PA/PA-X_sf"/>
</dbReference>
<dbReference type="Pfam" id="PF00603">
    <property type="entry name" value="Flu_PA"/>
    <property type="match status" value="1"/>
</dbReference>